<dbReference type="EMBL" id="CP000264">
    <property type="protein sequence ID" value="ABD53533.1"/>
    <property type="molecule type" value="Genomic_DNA"/>
</dbReference>
<dbReference type="RefSeq" id="WP_011453741.1">
    <property type="nucleotide sequence ID" value="NC_007802.1"/>
</dbReference>
<dbReference type="SMR" id="Q28US9"/>
<dbReference type="STRING" id="290400.Jann_0616"/>
<dbReference type="KEGG" id="jan:Jann_0616"/>
<dbReference type="eggNOG" id="COG0100">
    <property type="taxonomic scope" value="Bacteria"/>
</dbReference>
<dbReference type="HOGENOM" id="CLU_072439_5_0_5"/>
<dbReference type="OrthoDB" id="9806415at2"/>
<dbReference type="Proteomes" id="UP000008326">
    <property type="component" value="Chromosome"/>
</dbReference>
<dbReference type="GO" id="GO:1990904">
    <property type="term" value="C:ribonucleoprotein complex"/>
    <property type="evidence" value="ECO:0007669"/>
    <property type="project" value="UniProtKB-KW"/>
</dbReference>
<dbReference type="GO" id="GO:0005840">
    <property type="term" value="C:ribosome"/>
    <property type="evidence" value="ECO:0007669"/>
    <property type="project" value="UniProtKB-KW"/>
</dbReference>
<dbReference type="GO" id="GO:0019843">
    <property type="term" value="F:rRNA binding"/>
    <property type="evidence" value="ECO:0007669"/>
    <property type="project" value="UniProtKB-UniRule"/>
</dbReference>
<dbReference type="GO" id="GO:0003735">
    <property type="term" value="F:structural constituent of ribosome"/>
    <property type="evidence" value="ECO:0007669"/>
    <property type="project" value="InterPro"/>
</dbReference>
<dbReference type="GO" id="GO:0006412">
    <property type="term" value="P:translation"/>
    <property type="evidence" value="ECO:0007669"/>
    <property type="project" value="UniProtKB-UniRule"/>
</dbReference>
<dbReference type="FunFam" id="3.30.420.80:FF:000001">
    <property type="entry name" value="30S ribosomal protein S11"/>
    <property type="match status" value="1"/>
</dbReference>
<dbReference type="Gene3D" id="3.30.420.80">
    <property type="entry name" value="Ribosomal protein S11"/>
    <property type="match status" value="1"/>
</dbReference>
<dbReference type="HAMAP" id="MF_01310">
    <property type="entry name" value="Ribosomal_uS11"/>
    <property type="match status" value="1"/>
</dbReference>
<dbReference type="InterPro" id="IPR001971">
    <property type="entry name" value="Ribosomal_uS11"/>
</dbReference>
<dbReference type="InterPro" id="IPR019981">
    <property type="entry name" value="Ribosomal_uS11_bac-type"/>
</dbReference>
<dbReference type="InterPro" id="IPR018102">
    <property type="entry name" value="Ribosomal_uS11_CS"/>
</dbReference>
<dbReference type="InterPro" id="IPR036967">
    <property type="entry name" value="Ribosomal_uS11_sf"/>
</dbReference>
<dbReference type="NCBIfam" id="NF003698">
    <property type="entry name" value="PRK05309.1"/>
    <property type="match status" value="1"/>
</dbReference>
<dbReference type="NCBIfam" id="TIGR03632">
    <property type="entry name" value="uS11_bact"/>
    <property type="match status" value="1"/>
</dbReference>
<dbReference type="PANTHER" id="PTHR11759">
    <property type="entry name" value="40S RIBOSOMAL PROTEIN S14/30S RIBOSOMAL PROTEIN S11"/>
    <property type="match status" value="1"/>
</dbReference>
<dbReference type="Pfam" id="PF00411">
    <property type="entry name" value="Ribosomal_S11"/>
    <property type="match status" value="1"/>
</dbReference>
<dbReference type="PIRSF" id="PIRSF002131">
    <property type="entry name" value="Ribosomal_S11"/>
    <property type="match status" value="1"/>
</dbReference>
<dbReference type="SUPFAM" id="SSF53137">
    <property type="entry name" value="Translational machinery components"/>
    <property type="match status" value="1"/>
</dbReference>
<dbReference type="PROSITE" id="PS00054">
    <property type="entry name" value="RIBOSOMAL_S11"/>
    <property type="match status" value="1"/>
</dbReference>
<proteinExistence type="inferred from homology"/>
<protein>
    <recommendedName>
        <fullName evidence="1">Small ribosomal subunit protein uS11</fullName>
    </recommendedName>
    <alternativeName>
        <fullName evidence="2">30S ribosomal protein S11</fullName>
    </alternativeName>
</protein>
<evidence type="ECO:0000255" key="1">
    <source>
        <dbReference type="HAMAP-Rule" id="MF_01310"/>
    </source>
</evidence>
<evidence type="ECO:0000305" key="2"/>
<feature type="chain" id="PRO_0000294772" description="Small ribosomal subunit protein uS11">
    <location>
        <begin position="1"/>
        <end position="129"/>
    </location>
</feature>
<sequence length="129" mass="13711">MARDRRPAKKKVSKNIAAGVAHVNSSFNNTKILISDVQGNAIAWSSAGTMGFKGSRKSTPFAAQMAAEDAGKKAQDHGVRTLEVEVQGPGSGRESALRALAALGFQISSIRDVTPMAHNGCRPPKRRRV</sequence>
<accession>Q28US9</accession>
<organism>
    <name type="scientific">Jannaschia sp. (strain CCS1)</name>
    <dbReference type="NCBI Taxonomy" id="290400"/>
    <lineage>
        <taxon>Bacteria</taxon>
        <taxon>Pseudomonadati</taxon>
        <taxon>Pseudomonadota</taxon>
        <taxon>Alphaproteobacteria</taxon>
        <taxon>Rhodobacterales</taxon>
        <taxon>Roseobacteraceae</taxon>
        <taxon>Jannaschia</taxon>
    </lineage>
</organism>
<name>RS11_JANSC</name>
<keyword id="KW-1185">Reference proteome</keyword>
<keyword id="KW-0687">Ribonucleoprotein</keyword>
<keyword id="KW-0689">Ribosomal protein</keyword>
<keyword id="KW-0694">RNA-binding</keyword>
<keyword id="KW-0699">rRNA-binding</keyword>
<reference key="1">
    <citation type="submission" date="2006-02" db="EMBL/GenBank/DDBJ databases">
        <title>Complete sequence of chromosome of Jannaschia sp. CCS1.</title>
        <authorList>
            <consortium name="US DOE Joint Genome Institute"/>
            <person name="Copeland A."/>
            <person name="Lucas S."/>
            <person name="Lapidus A."/>
            <person name="Barry K."/>
            <person name="Detter J.C."/>
            <person name="Glavina del Rio T."/>
            <person name="Hammon N."/>
            <person name="Israni S."/>
            <person name="Pitluck S."/>
            <person name="Brettin T."/>
            <person name="Bruce D."/>
            <person name="Han C."/>
            <person name="Tapia R."/>
            <person name="Gilna P."/>
            <person name="Chertkov O."/>
            <person name="Saunders E."/>
            <person name="Schmutz J."/>
            <person name="Larimer F."/>
            <person name="Land M."/>
            <person name="Kyrpides N."/>
            <person name="Lykidis A."/>
            <person name="Moran M.A."/>
            <person name="Belas R."/>
            <person name="Ye W."/>
            <person name="Buchan A."/>
            <person name="Gonzalez J.M."/>
            <person name="Schell M.A."/>
            <person name="Richardson P."/>
        </authorList>
    </citation>
    <scope>NUCLEOTIDE SEQUENCE [LARGE SCALE GENOMIC DNA]</scope>
    <source>
        <strain>CCS1</strain>
    </source>
</reference>
<gene>
    <name evidence="1" type="primary">rpsK</name>
    <name type="ordered locus">Jann_0616</name>
</gene>
<comment type="function">
    <text evidence="1">Located on the platform of the 30S subunit, it bridges several disparate RNA helices of the 16S rRNA. Forms part of the Shine-Dalgarno cleft in the 70S ribosome.</text>
</comment>
<comment type="subunit">
    <text evidence="1">Part of the 30S ribosomal subunit. Interacts with proteins S7 and S18. Binds to IF-3.</text>
</comment>
<comment type="similarity">
    <text evidence="1">Belongs to the universal ribosomal protein uS11 family.</text>
</comment>